<feature type="chain" id="PRO_0000296559" description="Large ribosomal subunit protein bL32">
    <location>
        <begin position="1"/>
        <end position="56"/>
    </location>
</feature>
<feature type="region of interest" description="Disordered" evidence="2">
    <location>
        <begin position="1"/>
        <end position="26"/>
    </location>
</feature>
<feature type="compositionally biased region" description="Basic residues" evidence="2">
    <location>
        <begin position="7"/>
        <end position="16"/>
    </location>
</feature>
<gene>
    <name evidence="1" type="primary">rpmF</name>
    <name type="ordered locus">Sden_2297</name>
</gene>
<sequence length="56" mass="6281">MAVQQNKKSRSKRGMRRSHDALSTAQLSVDATSGELHLRHNVTADGFYRGKKVINK</sequence>
<organism>
    <name type="scientific">Shewanella denitrificans (strain OS217 / ATCC BAA-1090 / DSM 15013)</name>
    <dbReference type="NCBI Taxonomy" id="318161"/>
    <lineage>
        <taxon>Bacteria</taxon>
        <taxon>Pseudomonadati</taxon>
        <taxon>Pseudomonadota</taxon>
        <taxon>Gammaproteobacteria</taxon>
        <taxon>Alteromonadales</taxon>
        <taxon>Shewanellaceae</taxon>
        <taxon>Shewanella</taxon>
    </lineage>
</organism>
<evidence type="ECO:0000255" key="1">
    <source>
        <dbReference type="HAMAP-Rule" id="MF_00340"/>
    </source>
</evidence>
<evidence type="ECO:0000256" key="2">
    <source>
        <dbReference type="SAM" id="MobiDB-lite"/>
    </source>
</evidence>
<evidence type="ECO:0000305" key="3"/>
<comment type="similarity">
    <text evidence="1">Belongs to the bacterial ribosomal protein bL32 family.</text>
</comment>
<reference key="1">
    <citation type="submission" date="2006-03" db="EMBL/GenBank/DDBJ databases">
        <title>Complete sequence of Shewanella denitrificans OS217.</title>
        <authorList>
            <consortium name="US DOE Joint Genome Institute"/>
            <person name="Copeland A."/>
            <person name="Lucas S."/>
            <person name="Lapidus A."/>
            <person name="Barry K."/>
            <person name="Detter J.C."/>
            <person name="Glavina del Rio T."/>
            <person name="Hammon N."/>
            <person name="Israni S."/>
            <person name="Dalin E."/>
            <person name="Tice H."/>
            <person name="Pitluck S."/>
            <person name="Brettin T."/>
            <person name="Bruce D."/>
            <person name="Han C."/>
            <person name="Tapia R."/>
            <person name="Gilna P."/>
            <person name="Kiss H."/>
            <person name="Schmutz J."/>
            <person name="Larimer F."/>
            <person name="Land M."/>
            <person name="Hauser L."/>
            <person name="Kyrpides N."/>
            <person name="Lykidis A."/>
            <person name="Richardson P."/>
        </authorList>
    </citation>
    <scope>NUCLEOTIDE SEQUENCE [LARGE SCALE GENOMIC DNA]</scope>
    <source>
        <strain>OS217 / ATCC BAA-1090 / DSM 15013</strain>
    </source>
</reference>
<accession>Q12LU9</accession>
<name>RL32_SHEDO</name>
<dbReference type="EMBL" id="CP000302">
    <property type="protein sequence ID" value="ABE55577.1"/>
    <property type="molecule type" value="Genomic_DNA"/>
</dbReference>
<dbReference type="RefSeq" id="WP_011496728.1">
    <property type="nucleotide sequence ID" value="NC_007954.1"/>
</dbReference>
<dbReference type="SMR" id="Q12LU9"/>
<dbReference type="STRING" id="318161.Sden_2297"/>
<dbReference type="KEGG" id="sdn:Sden_2297"/>
<dbReference type="eggNOG" id="COG0333">
    <property type="taxonomic scope" value="Bacteria"/>
</dbReference>
<dbReference type="HOGENOM" id="CLU_129084_2_1_6"/>
<dbReference type="OrthoDB" id="9801927at2"/>
<dbReference type="Proteomes" id="UP000001982">
    <property type="component" value="Chromosome"/>
</dbReference>
<dbReference type="GO" id="GO:0015934">
    <property type="term" value="C:large ribosomal subunit"/>
    <property type="evidence" value="ECO:0007669"/>
    <property type="project" value="InterPro"/>
</dbReference>
<dbReference type="GO" id="GO:0003735">
    <property type="term" value="F:structural constituent of ribosome"/>
    <property type="evidence" value="ECO:0007669"/>
    <property type="project" value="InterPro"/>
</dbReference>
<dbReference type="GO" id="GO:0006412">
    <property type="term" value="P:translation"/>
    <property type="evidence" value="ECO:0007669"/>
    <property type="project" value="UniProtKB-UniRule"/>
</dbReference>
<dbReference type="HAMAP" id="MF_00340">
    <property type="entry name" value="Ribosomal_bL32"/>
    <property type="match status" value="1"/>
</dbReference>
<dbReference type="InterPro" id="IPR002677">
    <property type="entry name" value="Ribosomal_bL32"/>
</dbReference>
<dbReference type="InterPro" id="IPR044957">
    <property type="entry name" value="Ribosomal_bL32_bact"/>
</dbReference>
<dbReference type="InterPro" id="IPR011332">
    <property type="entry name" value="Ribosomal_zn-bd"/>
</dbReference>
<dbReference type="NCBIfam" id="TIGR01031">
    <property type="entry name" value="rpmF_bact"/>
    <property type="match status" value="1"/>
</dbReference>
<dbReference type="PANTHER" id="PTHR35534">
    <property type="entry name" value="50S RIBOSOMAL PROTEIN L32"/>
    <property type="match status" value="1"/>
</dbReference>
<dbReference type="PANTHER" id="PTHR35534:SF1">
    <property type="entry name" value="LARGE RIBOSOMAL SUBUNIT PROTEIN BL32"/>
    <property type="match status" value="1"/>
</dbReference>
<dbReference type="Pfam" id="PF01783">
    <property type="entry name" value="Ribosomal_L32p"/>
    <property type="match status" value="1"/>
</dbReference>
<dbReference type="SUPFAM" id="SSF57829">
    <property type="entry name" value="Zn-binding ribosomal proteins"/>
    <property type="match status" value="1"/>
</dbReference>
<proteinExistence type="inferred from homology"/>
<keyword id="KW-1185">Reference proteome</keyword>
<keyword id="KW-0687">Ribonucleoprotein</keyword>
<keyword id="KW-0689">Ribosomal protein</keyword>
<protein>
    <recommendedName>
        <fullName evidence="1">Large ribosomal subunit protein bL32</fullName>
    </recommendedName>
    <alternativeName>
        <fullName evidence="3">50S ribosomal protein L32</fullName>
    </alternativeName>
</protein>